<organism>
    <name type="scientific">Yersinia pestis bv. Antiqua (strain Nepal516)</name>
    <dbReference type="NCBI Taxonomy" id="377628"/>
    <lineage>
        <taxon>Bacteria</taxon>
        <taxon>Pseudomonadati</taxon>
        <taxon>Pseudomonadota</taxon>
        <taxon>Gammaproteobacteria</taxon>
        <taxon>Enterobacterales</taxon>
        <taxon>Yersiniaceae</taxon>
        <taxon>Yersinia</taxon>
    </lineage>
</organism>
<proteinExistence type="inferred from homology"/>
<accession>Q1CGK9</accession>
<accession>C4GVM5</accession>
<evidence type="ECO:0000255" key="1">
    <source>
        <dbReference type="HAMAP-Rule" id="MF_01179"/>
    </source>
</evidence>
<keyword id="KW-0131">Cell cycle</keyword>
<keyword id="KW-0132">Cell division</keyword>
<keyword id="KW-0227">DNA damage</keyword>
<keyword id="KW-0717">Septation</keyword>
<keyword id="KW-0742">SOS response</keyword>
<gene>
    <name evidence="1" type="primary">sulA</name>
    <name type="ordered locus">YPN_2543</name>
    <name type="ORF">YP516_2857</name>
</gene>
<feature type="chain" id="PRO_0000343983" description="Cell division inhibitor SulA">
    <location>
        <begin position="1"/>
        <end position="168"/>
    </location>
</feature>
<feature type="region of interest" description="FtsZ binding" evidence="1">
    <location>
        <begin position="106"/>
        <end position="112"/>
    </location>
</feature>
<feature type="region of interest" description="Lon protease binding" evidence="1">
    <location>
        <begin position="161"/>
        <end position="168"/>
    </location>
</feature>
<feature type="site" description="Essential for degradation by Lon protease" evidence="1">
    <location>
        <position position="168"/>
    </location>
</feature>
<dbReference type="EMBL" id="CP000305">
    <property type="protein sequence ID" value="ABG18871.1"/>
    <property type="molecule type" value="Genomic_DNA"/>
</dbReference>
<dbReference type="EMBL" id="ACNQ01000015">
    <property type="protein sequence ID" value="EEO75981.1"/>
    <property type="molecule type" value="Genomic_DNA"/>
</dbReference>
<dbReference type="RefSeq" id="WP_002213065.1">
    <property type="nucleotide sequence ID" value="NZ_ACNQ01000015.1"/>
</dbReference>
<dbReference type="SMR" id="Q1CGK9"/>
<dbReference type="GeneID" id="57977127"/>
<dbReference type="KEGG" id="ypn:YPN_2543"/>
<dbReference type="HOGENOM" id="CLU_118972_1_0_6"/>
<dbReference type="Proteomes" id="UP000008936">
    <property type="component" value="Chromosome"/>
</dbReference>
<dbReference type="GO" id="GO:0000917">
    <property type="term" value="P:division septum assembly"/>
    <property type="evidence" value="ECO:0007669"/>
    <property type="project" value="UniProtKB-KW"/>
</dbReference>
<dbReference type="GO" id="GO:0006281">
    <property type="term" value="P:DNA repair"/>
    <property type="evidence" value="ECO:0007669"/>
    <property type="project" value="TreeGrafter"/>
</dbReference>
<dbReference type="GO" id="GO:0051782">
    <property type="term" value="P:negative regulation of cell division"/>
    <property type="evidence" value="ECO:0007669"/>
    <property type="project" value="UniProtKB-UniRule"/>
</dbReference>
<dbReference type="GO" id="GO:0009432">
    <property type="term" value="P:SOS response"/>
    <property type="evidence" value="ECO:0007669"/>
    <property type="project" value="UniProtKB-UniRule"/>
</dbReference>
<dbReference type="FunFam" id="3.40.50.300:FF:000417">
    <property type="entry name" value="Cell division inhibitor SulA"/>
    <property type="match status" value="1"/>
</dbReference>
<dbReference type="Gene3D" id="3.40.50.300">
    <property type="entry name" value="P-loop containing nucleotide triphosphate hydrolases"/>
    <property type="match status" value="1"/>
</dbReference>
<dbReference type="HAMAP" id="MF_01179">
    <property type="entry name" value="SulA"/>
    <property type="match status" value="1"/>
</dbReference>
<dbReference type="InterPro" id="IPR004596">
    <property type="entry name" value="Cell_div_suppressor_SulA"/>
</dbReference>
<dbReference type="InterPro" id="IPR027417">
    <property type="entry name" value="P-loop_NTPase"/>
</dbReference>
<dbReference type="InterPro" id="IPR050356">
    <property type="entry name" value="SulA_CellDiv_inhibitor"/>
</dbReference>
<dbReference type="InterPro" id="IPR047696">
    <property type="entry name" value="SulA_enterobact"/>
</dbReference>
<dbReference type="NCBIfam" id="NF007892">
    <property type="entry name" value="PRK10595.1"/>
    <property type="match status" value="1"/>
</dbReference>
<dbReference type="NCBIfam" id="TIGR00623">
    <property type="entry name" value="SOS_SulA_coli"/>
    <property type="match status" value="1"/>
</dbReference>
<dbReference type="PANTHER" id="PTHR35369">
    <property type="entry name" value="BLR3025 PROTEIN-RELATED"/>
    <property type="match status" value="1"/>
</dbReference>
<dbReference type="PANTHER" id="PTHR35369:SF4">
    <property type="entry name" value="CELL DIVISION INHIBITOR SULA"/>
    <property type="match status" value="1"/>
</dbReference>
<dbReference type="Pfam" id="PF03846">
    <property type="entry name" value="SulA"/>
    <property type="match status" value="1"/>
</dbReference>
<dbReference type="PIRSF" id="PIRSF003093">
    <property type="entry name" value="SulA"/>
    <property type="match status" value="1"/>
</dbReference>
<dbReference type="SUPFAM" id="SSF52540">
    <property type="entry name" value="P-loop containing nucleoside triphosphate hydrolases"/>
    <property type="match status" value="1"/>
</dbReference>
<protein>
    <recommendedName>
        <fullName evidence="1">Cell division inhibitor SulA</fullName>
    </recommendedName>
</protein>
<sequence length="168" mass="19060">MRTQSLKPYHANYHSLTTNDSPTRVDAPTDSGLISEFVYSENQPVVTQLLLPLLQQLSKQSRWLLWLTPQQKLSRSWLKQSGLPINKVVQLRQINPLSTVEAMEKALLTGNYSVVLGWLPELTEDDRIRLRLAAKLGNAYGFVMRPLNDTKVGSGQCATLKIHSYLYH</sequence>
<name>SULA_YERPN</name>
<reference key="1">
    <citation type="journal article" date="2006" name="J. Bacteriol.">
        <title>Complete genome sequence of Yersinia pestis strains Antiqua and Nepal516: evidence of gene reduction in an emerging pathogen.</title>
        <authorList>
            <person name="Chain P.S.G."/>
            <person name="Hu P."/>
            <person name="Malfatti S.A."/>
            <person name="Radnedge L."/>
            <person name="Larimer F."/>
            <person name="Vergez L.M."/>
            <person name="Worsham P."/>
            <person name="Chu M.C."/>
            <person name="Andersen G.L."/>
        </authorList>
    </citation>
    <scope>NUCLEOTIDE SEQUENCE [LARGE SCALE GENOMIC DNA]</scope>
    <source>
        <strain>Nepal516</strain>
    </source>
</reference>
<reference key="2">
    <citation type="submission" date="2009-04" db="EMBL/GenBank/DDBJ databases">
        <title>Yersinia pestis Nepal516A whole genome shotgun sequencing project.</title>
        <authorList>
            <person name="Plunkett G. III"/>
            <person name="Anderson B.D."/>
            <person name="Baumler D.J."/>
            <person name="Burland V."/>
            <person name="Cabot E.L."/>
            <person name="Glasner J.D."/>
            <person name="Mau B."/>
            <person name="Neeno-Eckwall E."/>
            <person name="Perna N.T."/>
            <person name="Munk A.C."/>
            <person name="Tapia R."/>
            <person name="Green L.D."/>
            <person name="Rogers Y.C."/>
            <person name="Detter J.C."/>
            <person name="Bruce D.C."/>
            <person name="Brettin T.S."/>
        </authorList>
    </citation>
    <scope>NUCLEOTIDE SEQUENCE [LARGE SCALE GENOMIC DNA]</scope>
    <source>
        <strain>Nepal516</strain>
    </source>
</reference>
<comment type="function">
    <text evidence="1">Component of the SOS system and an inhibitor of cell division. Accumulation of SulA causes rapid cessation of cell division and the appearance of long, non-septate filaments. In the presence of GTP, binds a polymerization-competent form of FtsZ in a 1:1 ratio, thus inhibiting FtsZ polymerization and therefore preventing it from participating in the assembly of the Z ring. This mechanism prevents the premature segregation of damaged DNA to daughter cells during cell division.</text>
</comment>
<comment type="subunit">
    <text evidence="1">Interacts with FtsZ.</text>
</comment>
<comment type="induction">
    <text evidence="1">By DNA damage, as part of the SOS response.</text>
</comment>
<comment type="PTM">
    <text evidence="1">Is rapidly cleaved and degraded by the Lon protease once DNA damage is repaired.</text>
</comment>
<comment type="similarity">
    <text evidence="1">Belongs to the SulA family.</text>
</comment>